<reference key="1">
    <citation type="journal article" date="2005" name="Nat. Biotechnol.">
        <title>The complete genome sequence of the meat-borne lactic acid bacterium Lactobacillus sakei 23K.</title>
        <authorList>
            <person name="Chaillou S."/>
            <person name="Champomier-Verges M.-C."/>
            <person name="Cornet M."/>
            <person name="Crutz-Le Coq A.-M."/>
            <person name="Dudez A.-M."/>
            <person name="Martin V."/>
            <person name="Beaufils S."/>
            <person name="Darbon-Rongere E."/>
            <person name="Bossy R."/>
            <person name="Loux V."/>
            <person name="Zagorec M."/>
        </authorList>
    </citation>
    <scope>NUCLEOTIDE SEQUENCE [LARGE SCALE GENOMIC DNA]</scope>
    <source>
        <strain>23K</strain>
    </source>
</reference>
<dbReference type="EC" id="5.4.99.12" evidence="1"/>
<dbReference type="EMBL" id="CR936503">
    <property type="protein sequence ID" value="CAI56031.1"/>
    <property type="molecule type" value="Genomic_DNA"/>
</dbReference>
<dbReference type="RefSeq" id="WP_011375414.1">
    <property type="nucleotide sequence ID" value="NC_007576.1"/>
</dbReference>
<dbReference type="SMR" id="Q38UV3"/>
<dbReference type="STRING" id="314315.LCA_1723"/>
<dbReference type="KEGG" id="lsa:LCA_1723"/>
<dbReference type="eggNOG" id="COG0101">
    <property type="taxonomic scope" value="Bacteria"/>
</dbReference>
<dbReference type="HOGENOM" id="CLU_014673_0_1_9"/>
<dbReference type="OrthoDB" id="9811823at2"/>
<dbReference type="Proteomes" id="UP000002707">
    <property type="component" value="Chromosome"/>
</dbReference>
<dbReference type="GO" id="GO:0003723">
    <property type="term" value="F:RNA binding"/>
    <property type="evidence" value="ECO:0007669"/>
    <property type="project" value="InterPro"/>
</dbReference>
<dbReference type="GO" id="GO:0160147">
    <property type="term" value="F:tRNA pseudouridine(38-40) synthase activity"/>
    <property type="evidence" value="ECO:0007669"/>
    <property type="project" value="UniProtKB-EC"/>
</dbReference>
<dbReference type="GO" id="GO:0031119">
    <property type="term" value="P:tRNA pseudouridine synthesis"/>
    <property type="evidence" value="ECO:0007669"/>
    <property type="project" value="UniProtKB-UniRule"/>
</dbReference>
<dbReference type="CDD" id="cd02570">
    <property type="entry name" value="PseudoU_synth_EcTruA"/>
    <property type="match status" value="1"/>
</dbReference>
<dbReference type="FunFam" id="3.30.70.580:FF:000001">
    <property type="entry name" value="tRNA pseudouridine synthase A"/>
    <property type="match status" value="1"/>
</dbReference>
<dbReference type="Gene3D" id="3.30.70.660">
    <property type="entry name" value="Pseudouridine synthase I, catalytic domain, C-terminal subdomain"/>
    <property type="match status" value="1"/>
</dbReference>
<dbReference type="Gene3D" id="3.30.70.580">
    <property type="entry name" value="Pseudouridine synthase I, catalytic domain, N-terminal subdomain"/>
    <property type="match status" value="1"/>
</dbReference>
<dbReference type="HAMAP" id="MF_00171">
    <property type="entry name" value="TruA"/>
    <property type="match status" value="1"/>
</dbReference>
<dbReference type="InterPro" id="IPR020103">
    <property type="entry name" value="PsdUridine_synth_cat_dom_sf"/>
</dbReference>
<dbReference type="InterPro" id="IPR001406">
    <property type="entry name" value="PsdUridine_synth_TruA"/>
</dbReference>
<dbReference type="InterPro" id="IPR020097">
    <property type="entry name" value="PsdUridine_synth_TruA_a/b_dom"/>
</dbReference>
<dbReference type="InterPro" id="IPR020095">
    <property type="entry name" value="PsdUridine_synth_TruA_C"/>
</dbReference>
<dbReference type="InterPro" id="IPR020094">
    <property type="entry name" value="TruA/RsuA/RluB/E/F_N"/>
</dbReference>
<dbReference type="NCBIfam" id="TIGR00071">
    <property type="entry name" value="hisT_truA"/>
    <property type="match status" value="1"/>
</dbReference>
<dbReference type="PANTHER" id="PTHR11142">
    <property type="entry name" value="PSEUDOURIDYLATE SYNTHASE"/>
    <property type="match status" value="1"/>
</dbReference>
<dbReference type="PANTHER" id="PTHR11142:SF0">
    <property type="entry name" value="TRNA PSEUDOURIDINE SYNTHASE-LIKE 1"/>
    <property type="match status" value="1"/>
</dbReference>
<dbReference type="Pfam" id="PF01416">
    <property type="entry name" value="PseudoU_synth_1"/>
    <property type="match status" value="2"/>
</dbReference>
<dbReference type="PIRSF" id="PIRSF001430">
    <property type="entry name" value="tRNA_psdUrid_synth"/>
    <property type="match status" value="1"/>
</dbReference>
<dbReference type="SUPFAM" id="SSF55120">
    <property type="entry name" value="Pseudouridine synthase"/>
    <property type="match status" value="1"/>
</dbReference>
<name>TRUA_LATSS</name>
<feature type="chain" id="PRO_1000017103" description="tRNA pseudouridine synthase A">
    <location>
        <begin position="1"/>
        <end position="249"/>
    </location>
</feature>
<feature type="active site" description="Nucleophile" evidence="1">
    <location>
        <position position="54"/>
    </location>
</feature>
<feature type="binding site" evidence="1">
    <location>
        <position position="112"/>
    </location>
    <ligand>
        <name>substrate</name>
    </ligand>
</feature>
<gene>
    <name evidence="1" type="primary">truA</name>
    <name type="ordered locus">LCA_1723</name>
</gene>
<sequence length="249" mass="28341">MTQRYRVTVAYDGTDFAGFQVQPKQRTVQGTLEKALTKMSKGAYIQVYGSGRTDSGVHAMGQVVHFDYPSELPAKSMLRALNSLLPLDMEVVDSQLADDDFHARFSTVGKRYMYRVDLGHYTNPFKRRYTGHYPYPIDVERIKAALSDVMGTHDYTSFAAAGGVIKDKVRTIYEATVVYNEAENELIFEFHGNGFLYNMVRILVATLLEIGNGRRDVHDFLRLYEVKDRQQARSTAPASGLYLKEVYYK</sequence>
<keyword id="KW-0413">Isomerase</keyword>
<keyword id="KW-1185">Reference proteome</keyword>
<keyword id="KW-0819">tRNA processing</keyword>
<accession>Q38UV3</accession>
<evidence type="ECO:0000255" key="1">
    <source>
        <dbReference type="HAMAP-Rule" id="MF_00171"/>
    </source>
</evidence>
<comment type="function">
    <text evidence="1">Formation of pseudouridine at positions 38, 39 and 40 in the anticodon stem and loop of transfer RNAs.</text>
</comment>
<comment type="catalytic activity">
    <reaction evidence="1">
        <text>uridine(38/39/40) in tRNA = pseudouridine(38/39/40) in tRNA</text>
        <dbReference type="Rhea" id="RHEA:22376"/>
        <dbReference type="Rhea" id="RHEA-COMP:10085"/>
        <dbReference type="Rhea" id="RHEA-COMP:10087"/>
        <dbReference type="ChEBI" id="CHEBI:65314"/>
        <dbReference type="ChEBI" id="CHEBI:65315"/>
        <dbReference type="EC" id="5.4.99.12"/>
    </reaction>
</comment>
<comment type="subunit">
    <text evidence="1">Homodimer.</text>
</comment>
<comment type="similarity">
    <text evidence="1">Belongs to the tRNA pseudouridine synthase TruA family.</text>
</comment>
<protein>
    <recommendedName>
        <fullName evidence="1">tRNA pseudouridine synthase A</fullName>
        <ecNumber evidence="1">5.4.99.12</ecNumber>
    </recommendedName>
    <alternativeName>
        <fullName evidence="1">tRNA pseudouridine(38-40) synthase</fullName>
    </alternativeName>
    <alternativeName>
        <fullName evidence="1">tRNA pseudouridylate synthase I</fullName>
    </alternativeName>
    <alternativeName>
        <fullName evidence="1">tRNA-uridine isomerase I</fullName>
    </alternativeName>
</protein>
<organism>
    <name type="scientific">Latilactobacillus sakei subsp. sakei (strain 23K)</name>
    <name type="common">Lactobacillus sakei subsp. sakei</name>
    <dbReference type="NCBI Taxonomy" id="314315"/>
    <lineage>
        <taxon>Bacteria</taxon>
        <taxon>Bacillati</taxon>
        <taxon>Bacillota</taxon>
        <taxon>Bacilli</taxon>
        <taxon>Lactobacillales</taxon>
        <taxon>Lactobacillaceae</taxon>
        <taxon>Latilactobacillus</taxon>
    </lineage>
</organism>
<proteinExistence type="inferred from homology"/>